<sequence>MRNSDLAPLYRSAIGFDRLFNLLESGQNQSNGGYPPYNVELVDENNYRIAIAVAGFAEQELEITTQDNLLIVRGSHANEPAQRTYLYQGIAERNFERKFQLAEHIKIKGANLVNGLLYIDLERLVPESLKPRRIEIK</sequence>
<dbReference type="EMBL" id="BX936398">
    <property type="protein sequence ID" value="CAH23142.1"/>
    <property type="molecule type" value="Genomic_DNA"/>
</dbReference>
<dbReference type="RefSeq" id="WP_002209636.1">
    <property type="nucleotide sequence ID" value="NZ_CP009712.1"/>
</dbReference>
<dbReference type="SMR" id="Q663X0"/>
<dbReference type="GeneID" id="96663430"/>
<dbReference type="KEGG" id="ypo:BZ17_2677"/>
<dbReference type="KEGG" id="yps:YPTB3904"/>
<dbReference type="PATRIC" id="fig|273123.14.peg.2806"/>
<dbReference type="Proteomes" id="UP000001011">
    <property type="component" value="Chromosome"/>
</dbReference>
<dbReference type="GO" id="GO:0005737">
    <property type="term" value="C:cytoplasm"/>
    <property type="evidence" value="ECO:0007669"/>
    <property type="project" value="UniProtKB-SubCell"/>
</dbReference>
<dbReference type="GO" id="GO:0050821">
    <property type="term" value="P:protein stabilization"/>
    <property type="evidence" value="ECO:0007669"/>
    <property type="project" value="UniProtKB-UniRule"/>
</dbReference>
<dbReference type="CDD" id="cd06470">
    <property type="entry name" value="ACD_IbpA-B_like"/>
    <property type="match status" value="1"/>
</dbReference>
<dbReference type="FunFam" id="2.60.40.790:FF:000002">
    <property type="entry name" value="Small heat shock protein IbpA"/>
    <property type="match status" value="1"/>
</dbReference>
<dbReference type="Gene3D" id="2.60.40.790">
    <property type="match status" value="1"/>
</dbReference>
<dbReference type="HAMAP" id="MF_02000">
    <property type="entry name" value="HSP20_IbpA"/>
    <property type="match status" value="1"/>
</dbReference>
<dbReference type="InterPro" id="IPR002068">
    <property type="entry name" value="A-crystallin/Hsp20_dom"/>
</dbReference>
<dbReference type="InterPro" id="IPR037913">
    <property type="entry name" value="ACD_IbpA/B"/>
</dbReference>
<dbReference type="InterPro" id="IPR008978">
    <property type="entry name" value="HSP20-like_chaperone"/>
</dbReference>
<dbReference type="InterPro" id="IPR023728">
    <property type="entry name" value="HSP20_IbpA"/>
</dbReference>
<dbReference type="NCBIfam" id="NF008013">
    <property type="entry name" value="PRK10743.1"/>
    <property type="match status" value="1"/>
</dbReference>
<dbReference type="PANTHER" id="PTHR47062">
    <property type="match status" value="1"/>
</dbReference>
<dbReference type="PANTHER" id="PTHR47062:SF1">
    <property type="entry name" value="SMALL HEAT SHOCK PROTEIN IBPA"/>
    <property type="match status" value="1"/>
</dbReference>
<dbReference type="Pfam" id="PF00011">
    <property type="entry name" value="HSP20"/>
    <property type="match status" value="1"/>
</dbReference>
<dbReference type="SUPFAM" id="SSF49764">
    <property type="entry name" value="HSP20-like chaperones"/>
    <property type="match status" value="1"/>
</dbReference>
<dbReference type="PROSITE" id="PS01031">
    <property type="entry name" value="SHSP"/>
    <property type="match status" value="1"/>
</dbReference>
<keyword id="KW-0143">Chaperone</keyword>
<keyword id="KW-0963">Cytoplasm</keyword>
<keyword id="KW-0346">Stress response</keyword>
<feature type="chain" id="PRO_0000126027" description="Small heat shock protein IbpA">
    <location>
        <begin position="1"/>
        <end position="137"/>
    </location>
</feature>
<feature type="domain" description="sHSP" evidence="2">
    <location>
        <begin position="28"/>
        <end position="137"/>
    </location>
</feature>
<proteinExistence type="inferred from homology"/>
<gene>
    <name evidence="1" type="primary">ibpA</name>
    <name type="ordered locus">YPTB3904</name>
</gene>
<name>IBPA_YERPS</name>
<organism>
    <name type="scientific">Yersinia pseudotuberculosis serotype I (strain IP32953)</name>
    <dbReference type="NCBI Taxonomy" id="273123"/>
    <lineage>
        <taxon>Bacteria</taxon>
        <taxon>Pseudomonadati</taxon>
        <taxon>Pseudomonadota</taxon>
        <taxon>Gammaproteobacteria</taxon>
        <taxon>Enterobacterales</taxon>
        <taxon>Yersiniaceae</taxon>
        <taxon>Yersinia</taxon>
    </lineage>
</organism>
<comment type="function">
    <text evidence="1">Associates with aggregated proteins, together with IbpB, to stabilize and protect them from irreversible denaturation and extensive proteolysis during heat shock and oxidative stress. Aggregated proteins bound to the IbpAB complex are more efficiently refolded and reactivated by the ATP-dependent chaperone systems ClpB and DnaK/DnaJ/GrpE. Its activity is ATP-independent.</text>
</comment>
<comment type="subunit">
    <text evidence="1">Monomer. Forms homomultimers of about 100-150 subunits at optimal growth temperatures. Conformation changes to monomers at high temperatures or high ionic concentrations.</text>
</comment>
<comment type="subcellular location">
    <subcellularLocation>
        <location evidence="1">Cytoplasm</location>
    </subcellularLocation>
</comment>
<comment type="similarity">
    <text evidence="1 2">Belongs to the small heat shock protein (HSP20) family.</text>
</comment>
<protein>
    <recommendedName>
        <fullName evidence="1">Small heat shock protein IbpA</fullName>
    </recommendedName>
    <alternativeName>
        <fullName evidence="1">16 kDa heat shock protein A</fullName>
    </alternativeName>
</protein>
<reference key="1">
    <citation type="journal article" date="2004" name="Proc. Natl. Acad. Sci. U.S.A.">
        <title>Insights into the evolution of Yersinia pestis through whole-genome comparison with Yersinia pseudotuberculosis.</title>
        <authorList>
            <person name="Chain P.S.G."/>
            <person name="Carniel E."/>
            <person name="Larimer F.W."/>
            <person name="Lamerdin J."/>
            <person name="Stoutland P.O."/>
            <person name="Regala W.M."/>
            <person name="Georgescu A.M."/>
            <person name="Vergez L.M."/>
            <person name="Land M.L."/>
            <person name="Motin V.L."/>
            <person name="Brubaker R.R."/>
            <person name="Fowler J."/>
            <person name="Hinnebusch J."/>
            <person name="Marceau M."/>
            <person name="Medigue C."/>
            <person name="Simonet M."/>
            <person name="Chenal-Francisque V."/>
            <person name="Souza B."/>
            <person name="Dacheux D."/>
            <person name="Elliott J.M."/>
            <person name="Derbise A."/>
            <person name="Hauser L.J."/>
            <person name="Garcia E."/>
        </authorList>
    </citation>
    <scope>NUCLEOTIDE SEQUENCE [LARGE SCALE GENOMIC DNA]</scope>
    <source>
        <strain>IP32953</strain>
    </source>
</reference>
<accession>Q663X0</accession>
<evidence type="ECO:0000255" key="1">
    <source>
        <dbReference type="HAMAP-Rule" id="MF_02000"/>
    </source>
</evidence>
<evidence type="ECO:0000255" key="2">
    <source>
        <dbReference type="PROSITE-ProRule" id="PRU00285"/>
    </source>
</evidence>